<comment type="function">
    <text evidence="3">Has histone acetyltransferase activity, with a preference for histone H4.</text>
</comment>
<comment type="catalytic activity">
    <reaction>
        <text>L-lysyl-[protein] + acetyl-CoA = N(6)-acetyl-L-lysyl-[protein] + CoA + H(+)</text>
        <dbReference type="Rhea" id="RHEA:45948"/>
        <dbReference type="Rhea" id="RHEA-COMP:9752"/>
        <dbReference type="Rhea" id="RHEA-COMP:10731"/>
        <dbReference type="ChEBI" id="CHEBI:15378"/>
        <dbReference type="ChEBI" id="CHEBI:29969"/>
        <dbReference type="ChEBI" id="CHEBI:57287"/>
        <dbReference type="ChEBI" id="CHEBI:57288"/>
        <dbReference type="ChEBI" id="CHEBI:61930"/>
        <dbReference type="EC" id="2.3.1.48"/>
    </reaction>
</comment>
<comment type="subunit">
    <text evidence="4">Interacts (via chromo domain) with histone H3K9me3.</text>
</comment>
<comment type="subcellular location">
    <subcellularLocation>
        <location evidence="4">Nucleus</location>
    </subcellularLocation>
</comment>
<comment type="alternative products">
    <event type="alternative splicing"/>
    <isoform>
        <id>Q9Y6F8-1</id>
        <name>1</name>
        <sequence type="displayed"/>
    </isoform>
    <isoform>
        <id>Q9Y6F8-2</id>
        <name>2</name>
        <sequence type="described" ref="VSP_001079"/>
    </isoform>
</comment>
<comment type="tissue specificity">
    <text evidence="3">Testis-specific. Detected in spermatids (at protein level).</text>
</comment>
<feature type="chain" id="PRO_0000080219" description="Testis-specific chromodomain protein Y 1">
    <location>
        <begin position="1"/>
        <end position="540"/>
    </location>
</feature>
<feature type="domain" description="Chromo" evidence="1">
    <location>
        <begin position="6"/>
        <end position="66"/>
    </location>
</feature>
<feature type="region of interest" description="Disordered" evidence="2">
    <location>
        <begin position="76"/>
        <end position="106"/>
    </location>
</feature>
<feature type="compositionally biased region" description="Polar residues" evidence="2">
    <location>
        <begin position="87"/>
        <end position="97"/>
    </location>
</feature>
<feature type="splice variant" id="VSP_001079" description="In isoform 2." evidence="5 6">
    <original>YVENKIDEF</original>
    <variation>IPLLGYKAAFPPRKTQNDQRWCP</variation>
    <location>
        <begin position="532"/>
        <end position="540"/>
    </location>
</feature>
<feature type="strand" evidence="7">
    <location>
        <begin position="284"/>
        <end position="290"/>
    </location>
</feature>
<feature type="strand" evidence="7">
    <location>
        <begin position="292"/>
        <end position="299"/>
    </location>
</feature>
<feature type="strand" evidence="7">
    <location>
        <begin position="302"/>
        <end position="305"/>
    </location>
</feature>
<feature type="helix" evidence="7">
    <location>
        <begin position="311"/>
        <end position="326"/>
    </location>
</feature>
<feature type="strand" evidence="7">
    <location>
        <begin position="330"/>
        <end position="336"/>
    </location>
</feature>
<feature type="helix" evidence="7">
    <location>
        <begin position="347"/>
        <end position="356"/>
    </location>
</feature>
<feature type="helix" evidence="7">
    <location>
        <begin position="358"/>
        <end position="378"/>
    </location>
</feature>
<feature type="strand" evidence="7">
    <location>
        <begin position="383"/>
        <end position="387"/>
    </location>
</feature>
<feature type="helix" evidence="7">
    <location>
        <begin position="394"/>
        <end position="397"/>
    </location>
</feature>
<feature type="helix" evidence="7">
    <location>
        <begin position="399"/>
        <end position="401"/>
    </location>
</feature>
<feature type="strand" evidence="7">
    <location>
        <begin position="402"/>
        <end position="408"/>
    </location>
</feature>
<feature type="strand" evidence="7">
    <location>
        <begin position="412"/>
        <end position="414"/>
    </location>
</feature>
<feature type="helix" evidence="7">
    <location>
        <begin position="417"/>
        <end position="420"/>
    </location>
</feature>
<feature type="helix" evidence="7">
    <location>
        <begin position="428"/>
        <end position="436"/>
    </location>
</feature>
<feature type="helix" evidence="7">
    <location>
        <begin position="438"/>
        <end position="445"/>
    </location>
</feature>
<feature type="strand" evidence="7">
    <location>
        <begin position="450"/>
        <end position="452"/>
    </location>
</feature>
<feature type="helix" evidence="7">
    <location>
        <begin position="453"/>
        <end position="458"/>
    </location>
</feature>
<feature type="strand" evidence="7">
    <location>
        <begin position="463"/>
        <end position="466"/>
    </location>
</feature>
<feature type="helix" evidence="7">
    <location>
        <begin position="472"/>
        <end position="482"/>
    </location>
</feature>
<feature type="helix" evidence="7">
    <location>
        <begin position="487"/>
        <end position="498"/>
    </location>
</feature>
<feature type="turn" evidence="7">
    <location>
        <begin position="499"/>
        <end position="501"/>
    </location>
</feature>
<feature type="helix" evidence="7">
    <location>
        <begin position="502"/>
        <end position="520"/>
    </location>
</feature>
<feature type="helix" evidence="7">
    <location>
        <begin position="523"/>
        <end position="530"/>
    </location>
</feature>
<organism>
    <name type="scientific">Homo sapiens</name>
    <name type="common">Human</name>
    <dbReference type="NCBI Taxonomy" id="9606"/>
    <lineage>
        <taxon>Eukaryota</taxon>
        <taxon>Metazoa</taxon>
        <taxon>Chordata</taxon>
        <taxon>Craniata</taxon>
        <taxon>Vertebrata</taxon>
        <taxon>Euteleostomi</taxon>
        <taxon>Mammalia</taxon>
        <taxon>Eutheria</taxon>
        <taxon>Euarchontoglires</taxon>
        <taxon>Primates</taxon>
        <taxon>Haplorrhini</taxon>
        <taxon>Catarrhini</taxon>
        <taxon>Hominidae</taxon>
        <taxon>Homo</taxon>
    </lineage>
</organism>
<keyword id="KW-0002">3D-structure</keyword>
<keyword id="KW-0012">Acyltransferase</keyword>
<keyword id="KW-0025">Alternative splicing</keyword>
<keyword id="KW-0539">Nucleus</keyword>
<keyword id="KW-1185">Reference proteome</keyword>
<keyword id="KW-0808">Transferase</keyword>
<evidence type="ECO:0000255" key="1">
    <source>
        <dbReference type="PROSITE-ProRule" id="PRU00053"/>
    </source>
</evidence>
<evidence type="ECO:0000256" key="2">
    <source>
        <dbReference type="SAM" id="MobiDB-lite"/>
    </source>
</evidence>
<evidence type="ECO:0000269" key="3">
    <source>
    </source>
</evidence>
<evidence type="ECO:0000269" key="4">
    <source>
    </source>
</evidence>
<evidence type="ECO:0000303" key="5">
    <source>
    </source>
</evidence>
<evidence type="ECO:0000303" key="6">
    <source>
    </source>
</evidence>
<evidence type="ECO:0007829" key="7">
    <source>
        <dbReference type="PDB" id="2FBM"/>
    </source>
</evidence>
<gene>
    <name type="primary">CDY1</name>
    <name type="synonym">CDY1A</name>
</gene>
<gene>
    <name type="primary">CDY1B</name>
</gene>
<name>CDY1_HUMAN</name>
<sequence length="540" mass="60473">MASQEFEVEAIVDKRQDKNGNTQYLVRWKGYDKQDDTWEPEQHLMNCEKCVHDFNRRQTEKQKKLTWTTTSRIFSNNARRRTSRSTKANYSKNSPKTPVTDKHHRSKNRKLFAASKNVRRKAASILSDTKNMEIINSTIETLAPDSPFDHKTVSGFQKLEKLDPIAADQQDTVVFKVTEGKLLRDPLSRPGAEQTGIQNKTQIHPLMSQMSGSVTASMATGSATRKGIVVLIDPLAANGTTDMHTSVPRVKGGQRNITDDSRDQPFIKKMHFTIRLTESASTYRDIVVKKEDGFTQIVLSTRSTEKNALNTEVIKEIVNALNSAAADDSKLVLFSAAGSVFCCGLDFGYFVKHLRNNRNTASLEMVDTIKNFVNTFIQFKKPIVVSVNGPAIGLGASILPLCDLVWANEKAWFQTPYTTFGQSPDGCSSITFPKMMGKASANEMLIAGRKLTAREACAKGLVSQVFLTGTFTQEVMIQIKELASYNPIVLEECKALVRCNIKLELEQANERECEVLRKIWSSAQGIESMLKYVENKIDEF</sequence>
<reference key="1">
    <citation type="journal article" date="1997" name="Science">
        <title>Functional coherence of the human Y chromosome.</title>
        <authorList>
            <person name="Lahn B.T."/>
            <person name="Page D.C."/>
        </authorList>
    </citation>
    <scope>NUCLEOTIDE SEQUENCE [MRNA] (CDY1) (ISOFORM 2)</scope>
</reference>
<reference key="2">
    <citation type="journal article" date="1999" name="Nat. Genet.">
        <title>Retroposition of autosomal mRNA yielded testis-specific gene family on human Y chromosome.</title>
        <authorList>
            <person name="Lahn B.T."/>
            <person name="Page D.C."/>
        </authorList>
    </citation>
    <scope>NUCLEOTIDE SEQUENCE [MRNA] (CDY1A) (ISOFORM 1)</scope>
    <source>
        <tissue>Testis</tissue>
    </source>
</reference>
<reference key="3">
    <citation type="journal article" date="2004" name="Genome Res.">
        <title>The status, quality, and expansion of the NIH full-length cDNA project: the Mammalian Gene Collection (MGC).</title>
        <authorList>
            <consortium name="The MGC Project Team"/>
        </authorList>
    </citation>
    <scope>NUCLEOTIDE SEQUENCE [LARGE SCALE MRNA] (CDY1B) (ISOFORM 2)</scope>
</reference>
<reference key="4">
    <citation type="journal article" date="2002" name="Proc. Natl. Acad. Sci. U.S.A.">
        <title>Previously uncharacterized histone acetyltransferases implicated in mammalian spermatogenesis.</title>
        <authorList>
            <person name="Lahn B.T."/>
            <person name="Tang Z.L."/>
            <person name="Zhou J."/>
            <person name="Barndt R.J."/>
            <person name="Parvinen M."/>
            <person name="Allis C.D."/>
            <person name="Page D.C."/>
        </authorList>
    </citation>
    <scope>FUNCTION</scope>
    <scope>TISSUE SPECIFICITY</scope>
</reference>
<reference key="5">
    <citation type="journal article" date="2008" name="J. Biol. Chem.">
        <title>Specificity of the chromodomain Y chromosome family of chromodomains for lysine-methylated ARK(S/T) motifs.</title>
        <authorList>
            <person name="Fischle W."/>
            <person name="Franz H."/>
            <person name="Jacobs S.A."/>
            <person name="Allis C.D."/>
            <person name="Khorasanizadeh S."/>
        </authorList>
    </citation>
    <scope>INTERACTION WITH HISTONE H3K9ME3</scope>
    <scope>SUBCELLULAR LOCATION</scope>
</reference>
<reference key="6">
    <citation type="journal article" date="2009" name="Proteins">
        <title>Crystal structures of human CDY proteins reveal a crotonase-like fold.</title>
        <authorList>
            <person name="Wu H."/>
            <person name="Min J."/>
            <person name="Antoshenko T."/>
            <person name="Plotnikov A.N."/>
        </authorList>
    </citation>
    <scope>X-RAY CRYSTALLOGRAPHY (2.28 ANGSTROMS) OF 281-531</scope>
</reference>
<accession>Q9Y6F8</accession>
<accession>A2RUK1</accession>
<accession>O14600</accession>
<proteinExistence type="evidence at protein level"/>
<dbReference type="EC" id="2.3.1.48"/>
<dbReference type="EMBL" id="AF000981">
    <property type="protein sequence ID" value="AAC52116.1"/>
    <property type="molecule type" value="mRNA"/>
</dbReference>
<dbReference type="EMBL" id="AF080597">
    <property type="protein sequence ID" value="AAD22732.1"/>
    <property type="molecule type" value="mRNA"/>
</dbReference>
<dbReference type="EMBL" id="BC132929">
    <property type="protein sequence ID" value="AAI32930.1"/>
    <property type="molecule type" value="mRNA"/>
</dbReference>
<dbReference type="EMBL" id="BC132955">
    <property type="protein sequence ID" value="AAI32956.1"/>
    <property type="molecule type" value="mRNA"/>
</dbReference>
<dbReference type="CCDS" id="CCDS14801.1">
    <molecule id="Q9Y6F8-2"/>
</dbReference>
<dbReference type="CCDS" id="CCDS14802.1">
    <molecule id="Q9Y6F8-1"/>
</dbReference>
<dbReference type="CCDS" id="CCDS35486.1">
    <molecule id="Q9Y6F8-2"/>
</dbReference>
<dbReference type="CCDS" id="CCDS35487.1">
    <molecule id="Q9Y6F8-1"/>
</dbReference>
<dbReference type="RefSeq" id="NP_001003894.1">
    <molecule id="Q9Y6F8-1"/>
    <property type="nucleotide sequence ID" value="NM_001003894.1"/>
</dbReference>
<dbReference type="RefSeq" id="NP_001003895.1">
    <molecule id="Q9Y6F8-2"/>
    <property type="nucleotide sequence ID" value="NM_001003895.1"/>
</dbReference>
<dbReference type="RefSeq" id="NP_004671.1">
    <molecule id="Q9Y6F8-2"/>
    <property type="nucleotide sequence ID" value="NM_004680.3"/>
</dbReference>
<dbReference type="RefSeq" id="NP_733841.1">
    <molecule id="Q9Y6F8-1"/>
    <property type="nucleotide sequence ID" value="NM_170723.2"/>
</dbReference>
<dbReference type="PDB" id="2FBM">
    <property type="method" value="X-ray"/>
    <property type="resolution" value="2.28 A"/>
    <property type="chains" value="A/B/C=281-531"/>
</dbReference>
<dbReference type="PDB" id="6V41">
    <property type="method" value="X-ray"/>
    <property type="resolution" value="1.60 A"/>
    <property type="chains" value="AAA=2-63"/>
</dbReference>
<dbReference type="PDBsum" id="2FBM"/>
<dbReference type="PDBsum" id="6V41"/>
<dbReference type="SMR" id="Q9Y6F8"/>
<dbReference type="BioGRID" id="114541">
    <property type="interactions" value="5"/>
</dbReference>
<dbReference type="BioGRID" id="128959">
    <property type="interactions" value="1"/>
</dbReference>
<dbReference type="FunCoup" id="Q9Y6F8">
    <property type="interactions" value="175"/>
</dbReference>
<dbReference type="STRING" id="9606.ENSP00000302968"/>
<dbReference type="BindingDB" id="Q9Y6F8"/>
<dbReference type="ChEMBL" id="CHEMBL3879864"/>
<dbReference type="iPTMnet" id="Q9Y6F8"/>
<dbReference type="PhosphoSitePlus" id="Q9Y6F8"/>
<dbReference type="BioMuta" id="CDY1"/>
<dbReference type="DMDM" id="20138089"/>
<dbReference type="jPOST" id="Q9Y6F8"/>
<dbReference type="MassIVE" id="Q9Y6F8"/>
<dbReference type="ABCD" id="Q9Y6F8">
    <property type="antibodies" value="2 sequenced antibodies"/>
</dbReference>
<dbReference type="Antibodypedia" id="21896">
    <property type="antibodies" value="44 antibodies from 16 providers"/>
</dbReference>
<dbReference type="Antibodypedia" id="73015">
    <property type="antibodies" value="59 antibodies from 5 providers"/>
</dbReference>
<dbReference type="DNASU" id="253175"/>
<dbReference type="Ensembl" id="ENST00000306609.5">
    <molecule id="Q9Y6F8-2"/>
    <property type="protein sequence ID" value="ENSP00000302968.4"/>
    <property type="gene ID" value="ENSG00000172288.8"/>
</dbReference>
<dbReference type="Ensembl" id="ENST00000306882.4">
    <molecule id="Q9Y6F8-2"/>
    <property type="protein sequence ID" value="ENSP00000303178.4"/>
    <property type="gene ID" value="ENSG00000172352.5"/>
</dbReference>
<dbReference type="Ensembl" id="ENST00000361963.3">
    <molecule id="Q9Y6F8-1"/>
    <property type="protein sequence ID" value="ENSP00000354799.2"/>
    <property type="gene ID" value="ENSG00000172288.8"/>
</dbReference>
<dbReference type="Ensembl" id="ENST00000382407.1">
    <molecule id="Q9Y6F8-1"/>
    <property type="protein sequence ID" value="ENSP00000371844.1"/>
    <property type="gene ID" value="ENSG00000172352.5"/>
</dbReference>
<dbReference type="GeneID" id="253175"/>
<dbReference type="GeneID" id="9085"/>
<dbReference type="KEGG" id="hsa:253175"/>
<dbReference type="KEGG" id="hsa:9085"/>
<dbReference type="MANE-Select" id="ENST00000306609.5">
    <molecule id="Q9Y6F8-2"/>
    <property type="protein sequence ID" value="ENSP00000302968.4"/>
    <property type="RefSeq nucleotide sequence ID" value="NM_004680.3"/>
    <property type="RefSeq protein sequence ID" value="NP_004671.1"/>
</dbReference>
<dbReference type="MANE-Select" id="ENST00000382407.1">
    <property type="protein sequence ID" value="ENSP00000371844.1"/>
    <property type="RefSeq nucleotide sequence ID" value="NM_001003894.2"/>
    <property type="RefSeq protein sequence ID" value="NP_001003894.1"/>
</dbReference>
<dbReference type="UCSC" id="uc004fvz.4">
    <molecule id="Q9Y6F8-1"/>
    <property type="organism name" value="human"/>
</dbReference>
<dbReference type="AGR" id="HGNC:1809"/>
<dbReference type="AGR" id="HGNC:23920"/>
<dbReference type="CTD" id="253175"/>
<dbReference type="CTD" id="9085"/>
<dbReference type="DisGeNET" id="253175"/>
<dbReference type="DisGeNET" id="9085"/>
<dbReference type="GeneCards" id="CDY1"/>
<dbReference type="GeneCards" id="CDY1B"/>
<dbReference type="GeneReviews" id="CDY1"/>
<dbReference type="HGNC" id="HGNC:1809">
    <property type="gene designation" value="CDY1"/>
</dbReference>
<dbReference type="HGNC" id="HGNC:23920">
    <property type="gene designation" value="CDY1B"/>
</dbReference>
<dbReference type="HPA" id="ENSG00000172288">
    <property type="expression patterns" value="Tissue enriched (testis)"/>
</dbReference>
<dbReference type="HPA" id="ENSG00000172352">
    <property type="expression patterns" value="Tissue enriched (testis)"/>
</dbReference>
<dbReference type="MIM" id="400016">
    <property type="type" value="gene"/>
</dbReference>
<dbReference type="neXtProt" id="NX_Q9Y6F8"/>
<dbReference type="OpenTargets" id="ENSG00000172352"/>
<dbReference type="PharmGKB" id="PA26354"/>
<dbReference type="VEuPathDB" id="HostDB:ENSG00000172288"/>
<dbReference type="VEuPathDB" id="HostDB:ENSG00000172352"/>
<dbReference type="GeneTree" id="ENSGT00940000155106"/>
<dbReference type="HOGENOM" id="CLU_009834_24_0_1"/>
<dbReference type="InParanoid" id="Q9Y6F8"/>
<dbReference type="OMA" id="NEMLIVC"/>
<dbReference type="PAN-GO" id="Q9Y6F8">
    <property type="GO annotations" value="2 GO annotations based on evolutionary models"/>
</dbReference>
<dbReference type="PhylomeDB" id="Q9Y6F8"/>
<dbReference type="TreeFam" id="TF313375"/>
<dbReference type="PathwayCommons" id="Q9Y6F8"/>
<dbReference type="SignaLink" id="Q9Y6F8"/>
<dbReference type="BioGRID-ORCS" id="253175">
    <property type="hits" value="10 hits in 609 CRISPR screens"/>
</dbReference>
<dbReference type="BioGRID-ORCS" id="9085">
    <property type="hits" value="7 hits in 279 CRISPR screens"/>
</dbReference>
<dbReference type="EvolutionaryTrace" id="Q9Y6F8"/>
<dbReference type="GeneWiki" id="CDY1"/>
<dbReference type="Pharos" id="Q9Y6F8">
    <property type="development level" value="Tchem"/>
</dbReference>
<dbReference type="PRO" id="PR:Q9Y6F8"/>
<dbReference type="Proteomes" id="UP000005640">
    <property type="component" value="Chromosome Y"/>
</dbReference>
<dbReference type="RNAct" id="Q9Y6F8">
    <property type="molecule type" value="protein"/>
</dbReference>
<dbReference type="Bgee" id="ENSG00000172288">
    <property type="expression patterns" value="Expressed in left testis and 1 other cell type or tissue"/>
</dbReference>
<dbReference type="GO" id="GO:0005634">
    <property type="term" value="C:nucleus"/>
    <property type="evidence" value="ECO:0000314"/>
    <property type="project" value="UniProtKB"/>
</dbReference>
<dbReference type="GO" id="GO:0004402">
    <property type="term" value="F:histone acetyltransferase activity"/>
    <property type="evidence" value="ECO:0007669"/>
    <property type="project" value="UniProtKB-EC"/>
</dbReference>
<dbReference type="GO" id="GO:0061628">
    <property type="term" value="F:histone H3K27me3 reader activity"/>
    <property type="evidence" value="ECO:0000314"/>
    <property type="project" value="UniProtKB"/>
</dbReference>
<dbReference type="GO" id="GO:0062072">
    <property type="term" value="F:histone H3K9me2/3 reader activity"/>
    <property type="evidence" value="ECO:0000314"/>
    <property type="project" value="UniProtKB"/>
</dbReference>
<dbReference type="GO" id="GO:0003714">
    <property type="term" value="F:transcription corepressor activity"/>
    <property type="evidence" value="ECO:0000318"/>
    <property type="project" value="GO_Central"/>
</dbReference>
<dbReference type="GO" id="GO:0007283">
    <property type="term" value="P:spermatogenesis"/>
    <property type="evidence" value="ECO:0000304"/>
    <property type="project" value="ProtInc"/>
</dbReference>
<dbReference type="CDD" id="cd18634">
    <property type="entry name" value="CD_CDY"/>
    <property type="match status" value="1"/>
</dbReference>
<dbReference type="CDD" id="cd06558">
    <property type="entry name" value="crotonase-like"/>
    <property type="match status" value="1"/>
</dbReference>
<dbReference type="FunFam" id="1.10.12.10:FF:000006">
    <property type="entry name" value="Chromodomain Y-like protein"/>
    <property type="match status" value="1"/>
</dbReference>
<dbReference type="FunFam" id="3.90.226.10:FF:000012">
    <property type="entry name" value="Chromodomain Y-like protein 2"/>
    <property type="match status" value="1"/>
</dbReference>
<dbReference type="FunFam" id="2.40.50.40:FF:000043">
    <property type="entry name" value="Testis-specific chromodomain protein Y 2"/>
    <property type="match status" value="1"/>
</dbReference>
<dbReference type="Gene3D" id="2.40.50.40">
    <property type="match status" value="1"/>
</dbReference>
<dbReference type="Gene3D" id="3.90.226.10">
    <property type="entry name" value="2-enoyl-CoA Hydratase, Chain A, domain 1"/>
    <property type="match status" value="1"/>
</dbReference>
<dbReference type="Gene3D" id="1.10.12.10">
    <property type="entry name" value="Lyase 2-enoyl-coa Hydratase, Chain A, domain 2"/>
    <property type="match status" value="1"/>
</dbReference>
<dbReference type="InterPro" id="IPR016197">
    <property type="entry name" value="Chromo-like_dom_sf"/>
</dbReference>
<dbReference type="InterPro" id="IPR000953">
    <property type="entry name" value="Chromo/chromo_shadow_dom"/>
</dbReference>
<dbReference type="InterPro" id="IPR017984">
    <property type="entry name" value="Chromo_dom_subgr"/>
</dbReference>
<dbReference type="InterPro" id="IPR023780">
    <property type="entry name" value="Chromo_domain"/>
</dbReference>
<dbReference type="InterPro" id="IPR023779">
    <property type="entry name" value="Chromodomain_CS"/>
</dbReference>
<dbReference type="InterPro" id="IPR029045">
    <property type="entry name" value="ClpP/crotonase-like_dom_sf"/>
</dbReference>
<dbReference type="InterPro" id="IPR051053">
    <property type="entry name" value="ECH/Chromodomain_protein"/>
</dbReference>
<dbReference type="InterPro" id="IPR001753">
    <property type="entry name" value="Enoyl-CoA_hydra/iso"/>
</dbReference>
<dbReference type="InterPro" id="IPR014748">
    <property type="entry name" value="Enoyl-CoA_hydra_C"/>
</dbReference>
<dbReference type="PANTHER" id="PTHR43684">
    <property type="match status" value="1"/>
</dbReference>
<dbReference type="PANTHER" id="PTHR43684:SF6">
    <property type="entry name" value="TESTIS-SPECIFIC CHROMODOMAIN PROTEIN Y 1-RELATED"/>
    <property type="match status" value="1"/>
</dbReference>
<dbReference type="Pfam" id="PF00385">
    <property type="entry name" value="Chromo"/>
    <property type="match status" value="1"/>
</dbReference>
<dbReference type="Pfam" id="PF00378">
    <property type="entry name" value="ECH_1"/>
    <property type="match status" value="1"/>
</dbReference>
<dbReference type="PRINTS" id="PR00504">
    <property type="entry name" value="CHROMODOMAIN"/>
</dbReference>
<dbReference type="SMART" id="SM00298">
    <property type="entry name" value="CHROMO"/>
    <property type="match status" value="1"/>
</dbReference>
<dbReference type="SUPFAM" id="SSF54160">
    <property type="entry name" value="Chromo domain-like"/>
    <property type="match status" value="1"/>
</dbReference>
<dbReference type="SUPFAM" id="SSF52096">
    <property type="entry name" value="ClpP/crotonase"/>
    <property type="match status" value="1"/>
</dbReference>
<dbReference type="PROSITE" id="PS00598">
    <property type="entry name" value="CHROMO_1"/>
    <property type="match status" value="1"/>
</dbReference>
<dbReference type="PROSITE" id="PS50013">
    <property type="entry name" value="CHROMO_2"/>
    <property type="match status" value="1"/>
</dbReference>
<protein>
    <recommendedName>
        <fullName>Testis-specific chromodomain protein Y 1</fullName>
        <ecNumber>2.3.1.48</ecNumber>
    </recommendedName>
</protein>